<dbReference type="EC" id="6.3.4.21" evidence="1"/>
<dbReference type="EMBL" id="CU928145">
    <property type="protein sequence ID" value="CAU96842.1"/>
    <property type="molecule type" value="Genomic_DNA"/>
</dbReference>
<dbReference type="RefSeq" id="WP_001297200.1">
    <property type="nucleotide sequence ID" value="NC_011748.1"/>
</dbReference>
<dbReference type="SMR" id="B7LE31"/>
<dbReference type="GeneID" id="93776483"/>
<dbReference type="KEGG" id="eck:EC55989_0980"/>
<dbReference type="HOGENOM" id="CLU_030991_1_0_6"/>
<dbReference type="UniPathway" id="UPA00253">
    <property type="reaction ID" value="UER00457"/>
</dbReference>
<dbReference type="Proteomes" id="UP000000746">
    <property type="component" value="Chromosome"/>
</dbReference>
<dbReference type="GO" id="GO:0005829">
    <property type="term" value="C:cytosol"/>
    <property type="evidence" value="ECO:0007669"/>
    <property type="project" value="TreeGrafter"/>
</dbReference>
<dbReference type="GO" id="GO:0004516">
    <property type="term" value="F:nicotinate phosphoribosyltransferase activity"/>
    <property type="evidence" value="ECO:0007669"/>
    <property type="project" value="UniProtKB-UniRule"/>
</dbReference>
<dbReference type="GO" id="GO:0034355">
    <property type="term" value="P:NAD biosynthetic process via the salvage pathway"/>
    <property type="evidence" value="ECO:0007669"/>
    <property type="project" value="TreeGrafter"/>
</dbReference>
<dbReference type="CDD" id="cd01401">
    <property type="entry name" value="PncB_like"/>
    <property type="match status" value="1"/>
</dbReference>
<dbReference type="FunFam" id="3.20.140.10:FF:000001">
    <property type="entry name" value="Nicotinate phosphoribosyltransferase"/>
    <property type="match status" value="1"/>
</dbReference>
<dbReference type="Gene3D" id="3.20.140.10">
    <property type="entry name" value="nicotinate phosphoribosyltransferase"/>
    <property type="match status" value="1"/>
</dbReference>
<dbReference type="HAMAP" id="MF_00570">
    <property type="entry name" value="NAPRTase"/>
    <property type="match status" value="1"/>
</dbReference>
<dbReference type="InterPro" id="IPR041525">
    <property type="entry name" value="N/Namide_PRibTrfase"/>
</dbReference>
<dbReference type="InterPro" id="IPR040727">
    <property type="entry name" value="NAPRTase_N"/>
</dbReference>
<dbReference type="InterPro" id="IPR006406">
    <property type="entry name" value="Nic_PRibTrfase"/>
</dbReference>
<dbReference type="InterPro" id="IPR007229">
    <property type="entry name" value="Nic_PRibTrfase-Fam"/>
</dbReference>
<dbReference type="InterPro" id="IPR036068">
    <property type="entry name" value="Nicotinate_pribotase-like_C"/>
</dbReference>
<dbReference type="NCBIfam" id="TIGR01514">
    <property type="entry name" value="NAPRTase"/>
    <property type="match status" value="1"/>
</dbReference>
<dbReference type="NCBIfam" id="NF003704">
    <property type="entry name" value="PRK05321.1"/>
    <property type="match status" value="1"/>
</dbReference>
<dbReference type="PANTHER" id="PTHR11098">
    <property type="entry name" value="NICOTINATE PHOSPHORIBOSYLTRANSFERASE"/>
    <property type="match status" value="1"/>
</dbReference>
<dbReference type="PANTHER" id="PTHR11098:SF1">
    <property type="entry name" value="NICOTINATE PHOSPHORIBOSYLTRANSFERASE"/>
    <property type="match status" value="1"/>
</dbReference>
<dbReference type="Pfam" id="PF04095">
    <property type="entry name" value="NAPRTase"/>
    <property type="match status" value="1"/>
</dbReference>
<dbReference type="Pfam" id="PF17767">
    <property type="entry name" value="NAPRTase_N"/>
    <property type="match status" value="1"/>
</dbReference>
<dbReference type="PIRSF" id="PIRSF000484">
    <property type="entry name" value="NAPRT"/>
    <property type="match status" value="1"/>
</dbReference>
<dbReference type="SUPFAM" id="SSF51690">
    <property type="entry name" value="Nicotinate/Quinolinate PRTase C-terminal domain-like"/>
    <property type="match status" value="1"/>
</dbReference>
<dbReference type="SUPFAM" id="SSF54675">
    <property type="entry name" value="Nicotinate/Quinolinate PRTase N-terminal domain-like"/>
    <property type="match status" value="1"/>
</dbReference>
<keyword id="KW-0436">Ligase</keyword>
<keyword id="KW-0597">Phosphoprotein</keyword>
<keyword id="KW-0662">Pyridine nucleotide biosynthesis</keyword>
<keyword id="KW-1185">Reference proteome</keyword>
<organism>
    <name type="scientific">Escherichia coli (strain 55989 / EAEC)</name>
    <dbReference type="NCBI Taxonomy" id="585055"/>
    <lineage>
        <taxon>Bacteria</taxon>
        <taxon>Pseudomonadati</taxon>
        <taxon>Pseudomonadota</taxon>
        <taxon>Gammaproteobacteria</taxon>
        <taxon>Enterobacterales</taxon>
        <taxon>Enterobacteriaceae</taxon>
        <taxon>Escherichia</taxon>
    </lineage>
</organism>
<evidence type="ECO:0000255" key="1">
    <source>
        <dbReference type="HAMAP-Rule" id="MF_00570"/>
    </source>
</evidence>
<name>PNCB_ECO55</name>
<comment type="function">
    <text evidence="1">Catalyzes the synthesis of beta-nicotinate D-ribonucleotide from nicotinate and 5-phospho-D-ribose 1-phosphate at the expense of ATP.</text>
</comment>
<comment type="catalytic activity">
    <reaction evidence="1">
        <text>nicotinate + 5-phospho-alpha-D-ribose 1-diphosphate + ATP + H2O = nicotinate beta-D-ribonucleotide + ADP + phosphate + diphosphate</text>
        <dbReference type="Rhea" id="RHEA:36163"/>
        <dbReference type="ChEBI" id="CHEBI:15377"/>
        <dbReference type="ChEBI" id="CHEBI:30616"/>
        <dbReference type="ChEBI" id="CHEBI:32544"/>
        <dbReference type="ChEBI" id="CHEBI:33019"/>
        <dbReference type="ChEBI" id="CHEBI:43474"/>
        <dbReference type="ChEBI" id="CHEBI:57502"/>
        <dbReference type="ChEBI" id="CHEBI:58017"/>
        <dbReference type="ChEBI" id="CHEBI:456216"/>
        <dbReference type="EC" id="6.3.4.21"/>
    </reaction>
</comment>
<comment type="pathway">
    <text evidence="1">Cofactor biosynthesis; NAD(+) biosynthesis; nicotinate D-ribonucleotide from nicotinate: step 1/1.</text>
</comment>
<comment type="PTM">
    <text evidence="1">Transiently phosphorylated on a His residue during the reaction cycle. Phosphorylation strongly increases the affinity for substrates and increases the rate of nicotinate D-ribonucleotide production. Dephosphorylation regenerates the low-affinity form of the enzyme, leading to product release.</text>
</comment>
<comment type="similarity">
    <text evidence="1">Belongs to the NAPRTase family.</text>
</comment>
<accession>B7LE31</accession>
<reference key="1">
    <citation type="journal article" date="2009" name="PLoS Genet.">
        <title>Organised genome dynamics in the Escherichia coli species results in highly diverse adaptive paths.</title>
        <authorList>
            <person name="Touchon M."/>
            <person name="Hoede C."/>
            <person name="Tenaillon O."/>
            <person name="Barbe V."/>
            <person name="Baeriswyl S."/>
            <person name="Bidet P."/>
            <person name="Bingen E."/>
            <person name="Bonacorsi S."/>
            <person name="Bouchier C."/>
            <person name="Bouvet O."/>
            <person name="Calteau A."/>
            <person name="Chiapello H."/>
            <person name="Clermont O."/>
            <person name="Cruveiller S."/>
            <person name="Danchin A."/>
            <person name="Diard M."/>
            <person name="Dossat C."/>
            <person name="Karoui M.E."/>
            <person name="Frapy E."/>
            <person name="Garry L."/>
            <person name="Ghigo J.M."/>
            <person name="Gilles A.M."/>
            <person name="Johnson J."/>
            <person name="Le Bouguenec C."/>
            <person name="Lescat M."/>
            <person name="Mangenot S."/>
            <person name="Martinez-Jehanne V."/>
            <person name="Matic I."/>
            <person name="Nassif X."/>
            <person name="Oztas S."/>
            <person name="Petit M.A."/>
            <person name="Pichon C."/>
            <person name="Rouy Z."/>
            <person name="Ruf C.S."/>
            <person name="Schneider D."/>
            <person name="Tourret J."/>
            <person name="Vacherie B."/>
            <person name="Vallenet D."/>
            <person name="Medigue C."/>
            <person name="Rocha E.P.C."/>
            <person name="Denamur E."/>
        </authorList>
    </citation>
    <scope>NUCLEOTIDE SEQUENCE [LARGE SCALE GENOMIC DNA]</scope>
    <source>
        <strain>55989 / EAEC</strain>
    </source>
</reference>
<feature type="chain" id="PRO_1000146841" description="Nicotinate phosphoribosyltransferase">
    <location>
        <begin position="1"/>
        <end position="400"/>
    </location>
</feature>
<feature type="modified residue" description="Phosphohistidine; by autocatalysis" evidence="1">
    <location>
        <position position="220"/>
    </location>
</feature>
<protein>
    <recommendedName>
        <fullName evidence="1">Nicotinate phosphoribosyltransferase</fullName>
        <shortName evidence="1">NAPRTase</shortName>
        <ecNumber evidence="1">6.3.4.21</ecNumber>
    </recommendedName>
</protein>
<gene>
    <name evidence="1" type="primary">pncB</name>
    <name type="ordered locus">EC55989_0980</name>
</gene>
<proteinExistence type="inferred from homology"/>
<sequence length="400" mass="45911">MTQFASPVLHSLLDTDAYKLHMQQAVFHHYYDVHVAAEFRCRGDDLLGIYADAIREQIQAMQHLRLQDDEYQWLSALPFFKADYLNWLREFRFNPEQVTVSNDNGKLDIRLSGPWREVILWEVPLLAVISEMVHRYRSPQADVAQALDTLESKLVDFSALTAGLDMSRFHLMDFGTRRRFSREVQETIVKRLQQESWFVGTSNYDLARRLSLTPMGTQAHEWFQAHQQISPDLANSQRAALAAWLEEYPDQLGIALTDCITMDAFLRDFGVEFASRYQGLRHDSGDPVEWGEKAIAHYEKLGIDPQSKTLVFSDNLDLRKAVELYRHFSSRVQLSFGIGTRLTCDIPQVKPLNIVIKLVECNGKPVAKLSDSPGKTICHDKAFVRALRKAFDLPHIKKAS</sequence>